<reference key="1">
    <citation type="journal article" date="2003" name="Lancet">
        <title>Genome sequence of Vibrio parahaemolyticus: a pathogenic mechanism distinct from that of V. cholerae.</title>
        <authorList>
            <person name="Makino K."/>
            <person name="Oshima K."/>
            <person name="Kurokawa K."/>
            <person name="Yokoyama K."/>
            <person name="Uda T."/>
            <person name="Tagomori K."/>
            <person name="Iijima Y."/>
            <person name="Najima M."/>
            <person name="Nakano M."/>
            <person name="Yamashita A."/>
            <person name="Kubota Y."/>
            <person name="Kimura S."/>
            <person name="Yasunaga T."/>
            <person name="Honda T."/>
            <person name="Shinagawa H."/>
            <person name="Hattori M."/>
            <person name="Iida T."/>
        </authorList>
    </citation>
    <scope>NUCLEOTIDE SEQUENCE [LARGE SCALE GENOMIC DNA]</scope>
    <source>
        <strain>RIMD 2210633</strain>
    </source>
</reference>
<keyword id="KW-0067">ATP-binding</keyword>
<keyword id="KW-0173">Coenzyme A biosynthesis</keyword>
<keyword id="KW-0963">Cytoplasm</keyword>
<keyword id="KW-0418">Kinase</keyword>
<keyword id="KW-0547">Nucleotide-binding</keyword>
<keyword id="KW-0808">Transferase</keyword>
<sequence>MALVIGLTGGIASGKTTVANLFKQQFKIDIVDADIVAREVVEPGTPGLNAIIQHFGQDITHDDNTLDRAKLREKIFSNPEEKAWLNALLHPIIREKMIEDLQQVTSDYALLVVPLLVENNLDSLCDRVLVVDVEPETQISRTVKRDNVSEEQAHAILASQASRQQRLDIADDVVKNNPNDPDLLLQITDLHEKYLAMCKKNLRK</sequence>
<name>COAE_VIBPA</name>
<dbReference type="EC" id="2.7.1.24" evidence="1"/>
<dbReference type="EMBL" id="BA000031">
    <property type="protein sequence ID" value="BAC60790.1"/>
    <property type="molecule type" value="Genomic_DNA"/>
</dbReference>
<dbReference type="RefSeq" id="NP_798906.1">
    <property type="nucleotide sequence ID" value="NC_004603.1"/>
</dbReference>
<dbReference type="RefSeq" id="WP_005480887.1">
    <property type="nucleotide sequence ID" value="NC_004603.1"/>
</dbReference>
<dbReference type="SMR" id="Q87LT4"/>
<dbReference type="GeneID" id="1190042"/>
<dbReference type="KEGG" id="vpa:VP2527"/>
<dbReference type="PATRIC" id="fig|223926.6.peg.2424"/>
<dbReference type="eggNOG" id="COG0237">
    <property type="taxonomic scope" value="Bacteria"/>
</dbReference>
<dbReference type="HOGENOM" id="CLU_057180_1_2_6"/>
<dbReference type="UniPathway" id="UPA00241">
    <property type="reaction ID" value="UER00356"/>
</dbReference>
<dbReference type="Proteomes" id="UP000002493">
    <property type="component" value="Chromosome 1"/>
</dbReference>
<dbReference type="GO" id="GO:0005737">
    <property type="term" value="C:cytoplasm"/>
    <property type="evidence" value="ECO:0007669"/>
    <property type="project" value="UniProtKB-SubCell"/>
</dbReference>
<dbReference type="GO" id="GO:0005524">
    <property type="term" value="F:ATP binding"/>
    <property type="evidence" value="ECO:0007669"/>
    <property type="project" value="UniProtKB-UniRule"/>
</dbReference>
<dbReference type="GO" id="GO:0004140">
    <property type="term" value="F:dephospho-CoA kinase activity"/>
    <property type="evidence" value="ECO:0007669"/>
    <property type="project" value="UniProtKB-UniRule"/>
</dbReference>
<dbReference type="GO" id="GO:0015937">
    <property type="term" value="P:coenzyme A biosynthetic process"/>
    <property type="evidence" value="ECO:0007669"/>
    <property type="project" value="UniProtKB-UniRule"/>
</dbReference>
<dbReference type="CDD" id="cd02022">
    <property type="entry name" value="DPCK"/>
    <property type="match status" value="1"/>
</dbReference>
<dbReference type="FunFam" id="3.40.50.300:FF:000518">
    <property type="entry name" value="Dephospho-CoA kinase"/>
    <property type="match status" value="1"/>
</dbReference>
<dbReference type="Gene3D" id="3.40.50.300">
    <property type="entry name" value="P-loop containing nucleotide triphosphate hydrolases"/>
    <property type="match status" value="1"/>
</dbReference>
<dbReference type="HAMAP" id="MF_00376">
    <property type="entry name" value="Dephospho_CoA_kinase"/>
    <property type="match status" value="1"/>
</dbReference>
<dbReference type="InterPro" id="IPR001977">
    <property type="entry name" value="Depp_CoAkinase"/>
</dbReference>
<dbReference type="InterPro" id="IPR027417">
    <property type="entry name" value="P-loop_NTPase"/>
</dbReference>
<dbReference type="NCBIfam" id="TIGR00152">
    <property type="entry name" value="dephospho-CoA kinase"/>
    <property type="match status" value="1"/>
</dbReference>
<dbReference type="PANTHER" id="PTHR10695:SF46">
    <property type="entry name" value="BIFUNCTIONAL COENZYME A SYNTHASE-RELATED"/>
    <property type="match status" value="1"/>
</dbReference>
<dbReference type="PANTHER" id="PTHR10695">
    <property type="entry name" value="DEPHOSPHO-COA KINASE-RELATED"/>
    <property type="match status" value="1"/>
</dbReference>
<dbReference type="Pfam" id="PF01121">
    <property type="entry name" value="CoaE"/>
    <property type="match status" value="1"/>
</dbReference>
<dbReference type="SUPFAM" id="SSF52540">
    <property type="entry name" value="P-loop containing nucleoside triphosphate hydrolases"/>
    <property type="match status" value="1"/>
</dbReference>
<dbReference type="PROSITE" id="PS51219">
    <property type="entry name" value="DPCK"/>
    <property type="match status" value="1"/>
</dbReference>
<comment type="function">
    <text evidence="1">Catalyzes the phosphorylation of the 3'-hydroxyl group of dephosphocoenzyme A to form coenzyme A.</text>
</comment>
<comment type="catalytic activity">
    <reaction evidence="1">
        <text>3'-dephospho-CoA + ATP = ADP + CoA + H(+)</text>
        <dbReference type="Rhea" id="RHEA:18245"/>
        <dbReference type="ChEBI" id="CHEBI:15378"/>
        <dbReference type="ChEBI" id="CHEBI:30616"/>
        <dbReference type="ChEBI" id="CHEBI:57287"/>
        <dbReference type="ChEBI" id="CHEBI:57328"/>
        <dbReference type="ChEBI" id="CHEBI:456216"/>
        <dbReference type="EC" id="2.7.1.24"/>
    </reaction>
</comment>
<comment type="pathway">
    <text evidence="1">Cofactor biosynthesis; coenzyme A biosynthesis; CoA from (R)-pantothenate: step 5/5.</text>
</comment>
<comment type="subcellular location">
    <subcellularLocation>
        <location evidence="1">Cytoplasm</location>
    </subcellularLocation>
</comment>
<comment type="similarity">
    <text evidence="1">Belongs to the CoaE family.</text>
</comment>
<gene>
    <name evidence="1" type="primary">coaE</name>
    <name type="ordered locus">VP2527</name>
</gene>
<feature type="chain" id="PRO_0000173028" description="Dephospho-CoA kinase">
    <location>
        <begin position="1"/>
        <end position="204"/>
    </location>
</feature>
<feature type="domain" description="DPCK" evidence="1">
    <location>
        <begin position="4"/>
        <end position="201"/>
    </location>
</feature>
<feature type="binding site" evidence="1">
    <location>
        <begin position="12"/>
        <end position="17"/>
    </location>
    <ligand>
        <name>ATP</name>
        <dbReference type="ChEBI" id="CHEBI:30616"/>
    </ligand>
</feature>
<protein>
    <recommendedName>
        <fullName evidence="1">Dephospho-CoA kinase</fullName>
        <ecNumber evidence="1">2.7.1.24</ecNumber>
    </recommendedName>
    <alternativeName>
        <fullName evidence="1">Dephosphocoenzyme A kinase</fullName>
    </alternativeName>
</protein>
<organism>
    <name type="scientific">Vibrio parahaemolyticus serotype O3:K6 (strain RIMD 2210633)</name>
    <dbReference type="NCBI Taxonomy" id="223926"/>
    <lineage>
        <taxon>Bacteria</taxon>
        <taxon>Pseudomonadati</taxon>
        <taxon>Pseudomonadota</taxon>
        <taxon>Gammaproteobacteria</taxon>
        <taxon>Vibrionales</taxon>
        <taxon>Vibrionaceae</taxon>
        <taxon>Vibrio</taxon>
    </lineage>
</organism>
<proteinExistence type="inferred from homology"/>
<evidence type="ECO:0000255" key="1">
    <source>
        <dbReference type="HAMAP-Rule" id="MF_00376"/>
    </source>
</evidence>
<accession>Q87LT4</accession>